<dbReference type="EC" id="4.2.1.20" evidence="1"/>
<dbReference type="EMBL" id="CP000745">
    <property type="protein sequence ID" value="ABR65314.1"/>
    <property type="molecule type" value="Genomic_DNA"/>
</dbReference>
<dbReference type="SMR" id="A6VFT8"/>
<dbReference type="STRING" id="426368.MmarC7_0244"/>
<dbReference type="KEGG" id="mmz:MmarC7_0244"/>
<dbReference type="eggNOG" id="arCOG01086">
    <property type="taxonomic scope" value="Archaea"/>
</dbReference>
<dbReference type="HOGENOM" id="CLU_016734_0_2_2"/>
<dbReference type="OrthoDB" id="25658at2157"/>
<dbReference type="UniPathway" id="UPA00035">
    <property type="reaction ID" value="UER00044"/>
</dbReference>
<dbReference type="GO" id="GO:0005829">
    <property type="term" value="C:cytosol"/>
    <property type="evidence" value="ECO:0007669"/>
    <property type="project" value="TreeGrafter"/>
</dbReference>
<dbReference type="GO" id="GO:0004834">
    <property type="term" value="F:tryptophan synthase activity"/>
    <property type="evidence" value="ECO:0007669"/>
    <property type="project" value="UniProtKB-UniRule"/>
</dbReference>
<dbReference type="CDD" id="cd04724">
    <property type="entry name" value="Tryptophan_synthase_alpha"/>
    <property type="match status" value="1"/>
</dbReference>
<dbReference type="FunFam" id="3.20.20.70:FF:000037">
    <property type="entry name" value="Tryptophan synthase alpha chain"/>
    <property type="match status" value="1"/>
</dbReference>
<dbReference type="Gene3D" id="3.20.20.70">
    <property type="entry name" value="Aldolase class I"/>
    <property type="match status" value="1"/>
</dbReference>
<dbReference type="HAMAP" id="MF_00131">
    <property type="entry name" value="Trp_synth_alpha"/>
    <property type="match status" value="1"/>
</dbReference>
<dbReference type="InterPro" id="IPR013785">
    <property type="entry name" value="Aldolase_TIM"/>
</dbReference>
<dbReference type="InterPro" id="IPR011060">
    <property type="entry name" value="RibuloseP-bd_barrel"/>
</dbReference>
<dbReference type="InterPro" id="IPR018204">
    <property type="entry name" value="Trp_synthase_alpha_AS"/>
</dbReference>
<dbReference type="InterPro" id="IPR002028">
    <property type="entry name" value="Trp_synthase_suA"/>
</dbReference>
<dbReference type="NCBIfam" id="TIGR00262">
    <property type="entry name" value="trpA"/>
    <property type="match status" value="1"/>
</dbReference>
<dbReference type="PANTHER" id="PTHR43406:SF1">
    <property type="entry name" value="TRYPTOPHAN SYNTHASE ALPHA CHAIN, CHLOROPLASTIC"/>
    <property type="match status" value="1"/>
</dbReference>
<dbReference type="PANTHER" id="PTHR43406">
    <property type="entry name" value="TRYPTOPHAN SYNTHASE, ALPHA CHAIN"/>
    <property type="match status" value="1"/>
</dbReference>
<dbReference type="Pfam" id="PF00290">
    <property type="entry name" value="Trp_syntA"/>
    <property type="match status" value="1"/>
</dbReference>
<dbReference type="SUPFAM" id="SSF51366">
    <property type="entry name" value="Ribulose-phoshate binding barrel"/>
    <property type="match status" value="1"/>
</dbReference>
<dbReference type="PROSITE" id="PS00167">
    <property type="entry name" value="TRP_SYNTHASE_ALPHA"/>
    <property type="match status" value="1"/>
</dbReference>
<sequence>MNKPVLVSFLVSGDPNPDATLKFMKALDKYSGVIELGIPFSDPVADGPTIQAADVRALSNGFKIAKSFEVLKEFRKESDTPVILMTYYNPVFKRGIETFVMQAKEAGANGLIIVDLPLQEATEYREICKKHEMGTVFLAAPNTPEERLKISDEASTEFLYLISTFGITGARESFEQMTFDFIKRARTTCKGKICVGFGISKGSHAESLIEQGADGVIVGSAFVDIIKNYGDSEEALVKLEELAKELSEGIEKGYEKRNK</sequence>
<comment type="function">
    <text>The alpha subunit is responsible for the aldol cleavage of indoleglycerol phosphate to indole and glyceraldehyde 3-phosphate.</text>
</comment>
<comment type="catalytic activity">
    <reaction evidence="1">
        <text>(1S,2R)-1-C-(indol-3-yl)glycerol 3-phosphate + L-serine = D-glyceraldehyde 3-phosphate + L-tryptophan + H2O</text>
        <dbReference type="Rhea" id="RHEA:10532"/>
        <dbReference type="ChEBI" id="CHEBI:15377"/>
        <dbReference type="ChEBI" id="CHEBI:33384"/>
        <dbReference type="ChEBI" id="CHEBI:57912"/>
        <dbReference type="ChEBI" id="CHEBI:58866"/>
        <dbReference type="ChEBI" id="CHEBI:59776"/>
        <dbReference type="EC" id="4.2.1.20"/>
    </reaction>
</comment>
<comment type="pathway">
    <text evidence="1">Amino-acid biosynthesis; L-tryptophan biosynthesis; L-tryptophan from chorismate: step 5/5.</text>
</comment>
<comment type="subunit">
    <text evidence="1">Tetramer of two alpha and two beta chains.</text>
</comment>
<comment type="similarity">
    <text evidence="1">Belongs to the TrpA family.</text>
</comment>
<name>TRPA_METM7</name>
<keyword id="KW-0028">Amino-acid biosynthesis</keyword>
<keyword id="KW-0057">Aromatic amino acid biosynthesis</keyword>
<keyword id="KW-0456">Lyase</keyword>
<keyword id="KW-0822">Tryptophan biosynthesis</keyword>
<accession>A6VFT8</accession>
<evidence type="ECO:0000255" key="1">
    <source>
        <dbReference type="HAMAP-Rule" id="MF_00131"/>
    </source>
</evidence>
<protein>
    <recommendedName>
        <fullName evidence="1">Tryptophan synthase alpha chain</fullName>
        <ecNumber evidence="1">4.2.1.20</ecNumber>
    </recommendedName>
</protein>
<reference key="1">
    <citation type="submission" date="2007-06" db="EMBL/GenBank/DDBJ databases">
        <title>Complete sequence of Methanococcus maripaludis C7.</title>
        <authorList>
            <consortium name="US DOE Joint Genome Institute"/>
            <person name="Copeland A."/>
            <person name="Lucas S."/>
            <person name="Lapidus A."/>
            <person name="Barry K."/>
            <person name="Glavina del Rio T."/>
            <person name="Dalin E."/>
            <person name="Tice H."/>
            <person name="Pitluck S."/>
            <person name="Clum A."/>
            <person name="Schmutz J."/>
            <person name="Larimer F."/>
            <person name="Land M."/>
            <person name="Hauser L."/>
            <person name="Kyrpides N."/>
            <person name="Anderson I."/>
            <person name="Sieprawska-Lupa M."/>
            <person name="Whitman W.B."/>
            <person name="Richardson P."/>
        </authorList>
    </citation>
    <scope>NUCLEOTIDE SEQUENCE [LARGE SCALE GENOMIC DNA]</scope>
    <source>
        <strain>C7 / ATCC BAA-1331</strain>
    </source>
</reference>
<feature type="chain" id="PRO_1000018229" description="Tryptophan synthase alpha chain">
    <location>
        <begin position="1"/>
        <end position="259"/>
    </location>
</feature>
<feature type="active site" description="Proton acceptor" evidence="1">
    <location>
        <position position="35"/>
    </location>
</feature>
<feature type="active site" description="Proton acceptor" evidence="1">
    <location>
        <position position="46"/>
    </location>
</feature>
<organism>
    <name type="scientific">Methanococcus maripaludis (strain C7 / ATCC BAA-1331)</name>
    <dbReference type="NCBI Taxonomy" id="426368"/>
    <lineage>
        <taxon>Archaea</taxon>
        <taxon>Methanobacteriati</taxon>
        <taxon>Methanobacteriota</taxon>
        <taxon>Methanomada group</taxon>
        <taxon>Methanococci</taxon>
        <taxon>Methanococcales</taxon>
        <taxon>Methanococcaceae</taxon>
        <taxon>Methanococcus</taxon>
    </lineage>
</organism>
<proteinExistence type="inferred from homology"/>
<gene>
    <name evidence="1" type="primary">trpA</name>
    <name type="ordered locus">MmarC7_0244</name>
</gene>